<evidence type="ECO:0000250" key="1"/>
<evidence type="ECO:0000255" key="2">
    <source>
        <dbReference type="HAMAP-Rule" id="MF_00610"/>
    </source>
</evidence>
<comment type="function">
    <text evidence="2">Component of the cytochrome b6-f complex, which mediates electron transfer between photosystem II (PSII) and photosystem I (PSI), cyclic electron flow around PSI, and state transitions.</text>
</comment>
<comment type="cofactor">
    <cofactor evidence="2">
        <name>heme</name>
        <dbReference type="ChEBI" id="CHEBI:30413"/>
    </cofactor>
    <text evidence="2">Binds 1 heme group covalently.</text>
</comment>
<comment type="subunit">
    <text evidence="1">The 4 large subunits of the cytochrome b6-f complex are cytochrome b6, subunit IV (17 kDa polypeptide, petD), cytochrome f and the Rieske protein, while the 4 small subunits are PetG, PetL, PetM and PetN. The complex functions as a dimer (By similarity).</text>
</comment>
<comment type="subcellular location">
    <subcellularLocation>
        <location evidence="2">Plastid</location>
        <location evidence="2">Chloroplast thylakoid membrane</location>
        <topology evidence="2">Single-pass membrane protein</topology>
    </subcellularLocation>
</comment>
<comment type="similarity">
    <text evidence="2">Belongs to the cytochrome f family.</text>
</comment>
<proteinExistence type="inferred from homology"/>
<accession>Q14FE4</accession>
<organism>
    <name type="scientific">Populus alba</name>
    <name type="common">White poplar</name>
    <dbReference type="NCBI Taxonomy" id="43335"/>
    <lineage>
        <taxon>Eukaryota</taxon>
        <taxon>Viridiplantae</taxon>
        <taxon>Streptophyta</taxon>
        <taxon>Embryophyta</taxon>
        <taxon>Tracheophyta</taxon>
        <taxon>Spermatophyta</taxon>
        <taxon>Magnoliopsida</taxon>
        <taxon>eudicotyledons</taxon>
        <taxon>Gunneridae</taxon>
        <taxon>Pentapetalae</taxon>
        <taxon>rosids</taxon>
        <taxon>fabids</taxon>
        <taxon>Malpighiales</taxon>
        <taxon>Salicaceae</taxon>
        <taxon>Saliceae</taxon>
        <taxon>Populus</taxon>
    </lineage>
</organism>
<dbReference type="EMBL" id="AP008956">
    <property type="protein sequence ID" value="BAE97218.1"/>
    <property type="molecule type" value="Genomic_DNA"/>
</dbReference>
<dbReference type="RefSeq" id="YP_665571.1">
    <property type="nucleotide sequence ID" value="NC_008235.1"/>
</dbReference>
<dbReference type="SMR" id="Q14FE4"/>
<dbReference type="GeneID" id="4178238"/>
<dbReference type="KEGG" id="palz:4178238"/>
<dbReference type="OrthoDB" id="2808at3646"/>
<dbReference type="GO" id="GO:0009535">
    <property type="term" value="C:chloroplast thylakoid membrane"/>
    <property type="evidence" value="ECO:0007669"/>
    <property type="project" value="UniProtKB-SubCell"/>
</dbReference>
<dbReference type="GO" id="GO:0009055">
    <property type="term" value="F:electron transfer activity"/>
    <property type="evidence" value="ECO:0007669"/>
    <property type="project" value="UniProtKB-UniRule"/>
</dbReference>
<dbReference type="GO" id="GO:0020037">
    <property type="term" value="F:heme binding"/>
    <property type="evidence" value="ECO:0007669"/>
    <property type="project" value="InterPro"/>
</dbReference>
<dbReference type="GO" id="GO:0005506">
    <property type="term" value="F:iron ion binding"/>
    <property type="evidence" value="ECO:0007669"/>
    <property type="project" value="InterPro"/>
</dbReference>
<dbReference type="GO" id="GO:0015979">
    <property type="term" value="P:photosynthesis"/>
    <property type="evidence" value="ECO:0007669"/>
    <property type="project" value="UniProtKB-UniRule"/>
</dbReference>
<dbReference type="FunFam" id="1.20.5.700:FF:000001">
    <property type="entry name" value="Cytochrome f"/>
    <property type="match status" value="1"/>
</dbReference>
<dbReference type="FunFam" id="2.40.50.100:FF:000007">
    <property type="entry name" value="Cytochrome f"/>
    <property type="match status" value="1"/>
</dbReference>
<dbReference type="FunFam" id="2.60.40.830:FF:000001">
    <property type="entry name" value="Cytochrome f"/>
    <property type="match status" value="1"/>
</dbReference>
<dbReference type="Gene3D" id="2.40.50.100">
    <property type="match status" value="1"/>
</dbReference>
<dbReference type="Gene3D" id="2.60.40.830">
    <property type="entry name" value="Cytochrome f large domain"/>
    <property type="match status" value="1"/>
</dbReference>
<dbReference type="Gene3D" id="1.20.5.700">
    <property type="entry name" value="Single helix bin"/>
    <property type="match status" value="1"/>
</dbReference>
<dbReference type="HAMAP" id="MF_00610">
    <property type="entry name" value="Cytb6_f_cytF"/>
    <property type="match status" value="1"/>
</dbReference>
<dbReference type="InterPro" id="IPR024058">
    <property type="entry name" value="Cyt-f_TM"/>
</dbReference>
<dbReference type="InterPro" id="IPR002325">
    <property type="entry name" value="Cyt_f"/>
</dbReference>
<dbReference type="InterPro" id="IPR024094">
    <property type="entry name" value="Cyt_f_lg_dom"/>
</dbReference>
<dbReference type="InterPro" id="IPR036826">
    <property type="entry name" value="Cyt_f_lg_dom_sf"/>
</dbReference>
<dbReference type="InterPro" id="IPR011054">
    <property type="entry name" value="Rudment_hybrid_motif"/>
</dbReference>
<dbReference type="PANTHER" id="PTHR33288">
    <property type="match status" value="1"/>
</dbReference>
<dbReference type="PANTHER" id="PTHR33288:SF10">
    <property type="entry name" value="CYTOCHROME F"/>
    <property type="match status" value="1"/>
</dbReference>
<dbReference type="Pfam" id="PF01333">
    <property type="entry name" value="Apocytochr_F_C"/>
    <property type="match status" value="1"/>
</dbReference>
<dbReference type="Pfam" id="PF16639">
    <property type="entry name" value="Apocytochr_F_N"/>
    <property type="match status" value="1"/>
</dbReference>
<dbReference type="PRINTS" id="PR00610">
    <property type="entry name" value="CYTOCHROMEF"/>
</dbReference>
<dbReference type="SUPFAM" id="SSF103431">
    <property type="entry name" value="Cytochrome f subunit of the cytochrome b6f complex, transmembrane anchor"/>
    <property type="match status" value="1"/>
</dbReference>
<dbReference type="SUPFAM" id="SSF49441">
    <property type="entry name" value="Cytochrome f, large domain"/>
    <property type="match status" value="1"/>
</dbReference>
<dbReference type="SUPFAM" id="SSF51246">
    <property type="entry name" value="Rudiment single hybrid motif"/>
    <property type="match status" value="1"/>
</dbReference>
<dbReference type="PROSITE" id="PS51010">
    <property type="entry name" value="CYTF"/>
    <property type="match status" value="1"/>
</dbReference>
<protein>
    <recommendedName>
        <fullName evidence="2">Cytochrome f</fullName>
    </recommendedName>
</protein>
<keyword id="KW-0150">Chloroplast</keyword>
<keyword id="KW-0249">Electron transport</keyword>
<keyword id="KW-0349">Heme</keyword>
<keyword id="KW-0408">Iron</keyword>
<keyword id="KW-0472">Membrane</keyword>
<keyword id="KW-0479">Metal-binding</keyword>
<keyword id="KW-0602">Photosynthesis</keyword>
<keyword id="KW-0934">Plastid</keyword>
<keyword id="KW-0732">Signal</keyword>
<keyword id="KW-0793">Thylakoid</keyword>
<keyword id="KW-0812">Transmembrane</keyword>
<keyword id="KW-1133">Transmembrane helix</keyword>
<keyword id="KW-0813">Transport</keyword>
<sequence>MQTRKTLSWIKEEITRSISVSLMIYIITGAYISNAYPIFAQQGYENPREATGRIVCANCHLANKPVGIEVPQAVLPDTVFEAVVRIPYDMQLKQVLANGKKGALNVGAVLILPEGFELAPPDRISPEMKEKIGNLSFQSYRPAKKNILVIGPVPGQKYSEITFPILSPDPAAKKDTHFLKYPIYVGGNRGRGQIYPDGSKSNNTVYNATAAGIVSKIIRKEKGGYEITITDAPEGRQVIDSIPPGPELLVSEGESIKLDQPLTSNPNVGGFGQGDAEIVLQDPLRVQGLLFFLASVILAQIFLVLKKKQFEKVQLSEMNF</sequence>
<feature type="signal peptide" evidence="2">
    <location>
        <begin position="1"/>
        <end position="35"/>
    </location>
</feature>
<feature type="chain" id="PRO_0000275443" description="Cytochrome f">
    <location>
        <begin position="36"/>
        <end position="320"/>
    </location>
</feature>
<feature type="transmembrane region" description="Helical" evidence="2">
    <location>
        <begin position="286"/>
        <end position="306"/>
    </location>
</feature>
<feature type="binding site" description="axial binding residue" evidence="2">
    <location>
        <position position="36"/>
    </location>
    <ligand>
        <name>heme</name>
        <dbReference type="ChEBI" id="CHEBI:30413"/>
    </ligand>
    <ligandPart>
        <name>Fe</name>
        <dbReference type="ChEBI" id="CHEBI:18248"/>
    </ligandPart>
</feature>
<feature type="binding site" description="covalent" evidence="2">
    <location>
        <position position="56"/>
    </location>
    <ligand>
        <name>heme</name>
        <dbReference type="ChEBI" id="CHEBI:30413"/>
    </ligand>
</feature>
<feature type="binding site" description="covalent" evidence="2">
    <location>
        <position position="59"/>
    </location>
    <ligand>
        <name>heme</name>
        <dbReference type="ChEBI" id="CHEBI:30413"/>
    </ligand>
</feature>
<feature type="binding site" description="axial binding residue" evidence="2">
    <location>
        <position position="60"/>
    </location>
    <ligand>
        <name>heme</name>
        <dbReference type="ChEBI" id="CHEBI:30413"/>
    </ligand>
    <ligandPart>
        <name>Fe</name>
        <dbReference type="ChEBI" id="CHEBI:18248"/>
    </ligandPart>
</feature>
<name>CYF_POPAL</name>
<gene>
    <name evidence="2" type="primary">petA</name>
</gene>
<reference key="1">
    <citation type="submission" date="2005-03" db="EMBL/GenBank/DDBJ databases">
        <title>Complete structure of the chloroplast genome of Populus alba.</title>
        <authorList>
            <person name="Okumura S."/>
            <person name="Yamashita A."/>
            <person name="Kanamoto H."/>
            <person name="Hattori M."/>
            <person name="Takase H."/>
            <person name="Tomizawa K."/>
        </authorList>
    </citation>
    <scope>NUCLEOTIDE SEQUENCE [LARGE SCALE GENOMIC DNA]</scope>
</reference>
<geneLocation type="chloroplast"/>